<name>ILVC_XANE5</name>
<protein>
    <recommendedName>
        <fullName evidence="1">Ketol-acid reductoisomerase (NADP(+))</fullName>
        <shortName evidence="1">KARI</shortName>
        <ecNumber evidence="1">1.1.1.86</ecNumber>
    </recommendedName>
    <alternativeName>
        <fullName evidence="1">Acetohydroxy-acid isomeroreductase</fullName>
        <shortName evidence="1">AHIR</shortName>
    </alternativeName>
    <alternativeName>
        <fullName evidence="1">Alpha-keto-beta-hydroxylacyl reductoisomerase</fullName>
    </alternativeName>
    <alternativeName>
        <fullName evidence="1">Ketol-acid reductoisomerase type 1</fullName>
    </alternativeName>
    <alternativeName>
        <fullName evidence="1">Ketol-acid reductoisomerase type I</fullName>
    </alternativeName>
</protein>
<feature type="chain" id="PRO_0000226213" description="Ketol-acid reductoisomerase (NADP(+))">
    <location>
        <begin position="1"/>
        <end position="333"/>
    </location>
</feature>
<feature type="domain" description="KARI N-terminal Rossmann" evidence="2">
    <location>
        <begin position="1"/>
        <end position="171"/>
    </location>
</feature>
<feature type="domain" description="KARI C-terminal knotted" evidence="3">
    <location>
        <begin position="172"/>
        <end position="317"/>
    </location>
</feature>
<feature type="active site" evidence="1">
    <location>
        <position position="97"/>
    </location>
</feature>
<feature type="binding site" evidence="1">
    <location>
        <begin position="14"/>
        <end position="17"/>
    </location>
    <ligand>
        <name>NADP(+)</name>
        <dbReference type="ChEBI" id="CHEBI:58349"/>
    </ligand>
</feature>
<feature type="binding site" evidence="1">
    <location>
        <position position="37"/>
    </location>
    <ligand>
        <name>NADP(+)</name>
        <dbReference type="ChEBI" id="CHEBI:58349"/>
    </ligand>
</feature>
<feature type="binding site" evidence="1">
    <location>
        <position position="42"/>
    </location>
    <ligand>
        <name>NADP(+)</name>
        <dbReference type="ChEBI" id="CHEBI:58349"/>
    </ligand>
</feature>
<feature type="binding site" evidence="1">
    <location>
        <begin position="72"/>
        <end position="75"/>
    </location>
    <ligand>
        <name>NADP(+)</name>
        <dbReference type="ChEBI" id="CHEBI:58349"/>
    </ligand>
</feature>
<feature type="binding site" evidence="1">
    <location>
        <position position="123"/>
    </location>
    <ligand>
        <name>NADP(+)</name>
        <dbReference type="ChEBI" id="CHEBI:58349"/>
    </ligand>
</feature>
<feature type="binding site" evidence="1">
    <location>
        <position position="180"/>
    </location>
    <ligand>
        <name>Mg(2+)</name>
        <dbReference type="ChEBI" id="CHEBI:18420"/>
        <label>1</label>
    </ligand>
</feature>
<feature type="binding site" evidence="1">
    <location>
        <position position="180"/>
    </location>
    <ligand>
        <name>Mg(2+)</name>
        <dbReference type="ChEBI" id="CHEBI:18420"/>
        <label>2</label>
    </ligand>
</feature>
<feature type="binding site" evidence="1">
    <location>
        <position position="184"/>
    </location>
    <ligand>
        <name>Mg(2+)</name>
        <dbReference type="ChEBI" id="CHEBI:18420"/>
        <label>1</label>
    </ligand>
</feature>
<feature type="binding site" evidence="1">
    <location>
        <position position="216"/>
    </location>
    <ligand>
        <name>Mg(2+)</name>
        <dbReference type="ChEBI" id="CHEBI:18420"/>
        <label>2</label>
    </ligand>
</feature>
<feature type="binding site" evidence="1">
    <location>
        <position position="220"/>
    </location>
    <ligand>
        <name>Mg(2+)</name>
        <dbReference type="ChEBI" id="CHEBI:18420"/>
        <label>2</label>
    </ligand>
</feature>
<feature type="binding site" evidence="1">
    <location>
        <position position="241"/>
    </location>
    <ligand>
        <name>substrate</name>
    </ligand>
</feature>
<gene>
    <name evidence="1" type="primary">ilvC</name>
    <name type="ordered locus">XCV3579</name>
</gene>
<reference key="1">
    <citation type="journal article" date="2005" name="J. Bacteriol.">
        <title>Insights into genome plasticity and pathogenicity of the plant pathogenic Bacterium Xanthomonas campestris pv. vesicatoria revealed by the complete genome sequence.</title>
        <authorList>
            <person name="Thieme F."/>
            <person name="Koebnik R."/>
            <person name="Bekel T."/>
            <person name="Berger C."/>
            <person name="Boch J."/>
            <person name="Buettner D."/>
            <person name="Caldana C."/>
            <person name="Gaigalat L."/>
            <person name="Goesmann A."/>
            <person name="Kay S."/>
            <person name="Kirchner O."/>
            <person name="Lanz C."/>
            <person name="Linke B."/>
            <person name="McHardy A.C."/>
            <person name="Meyer F."/>
            <person name="Mittenhuber G."/>
            <person name="Nies D.H."/>
            <person name="Niesbach-Kloesgen U."/>
            <person name="Patschkowski T."/>
            <person name="Rueckert C."/>
            <person name="Rupp O."/>
            <person name="Schneiker S."/>
            <person name="Schuster S.C."/>
            <person name="Vorhoelter F.J."/>
            <person name="Weber E."/>
            <person name="Puehler A."/>
            <person name="Bonas U."/>
            <person name="Bartels D."/>
            <person name="Kaiser O."/>
        </authorList>
    </citation>
    <scope>NUCLEOTIDE SEQUENCE [LARGE SCALE GENOMIC DNA]</scope>
    <source>
        <strain>85-10</strain>
    </source>
</reference>
<comment type="function">
    <text evidence="1">Involved in the biosynthesis of branched-chain amino acids (BCAA). Catalyzes an alkyl-migration followed by a ketol-acid reduction of (S)-2-acetolactate (S2AL) to yield (R)-2,3-dihydroxy-isovalerate. In the isomerase reaction, S2AL is rearranged via a Mg-dependent methyl migration to produce 3-hydroxy-3-methyl-2-ketobutyrate (HMKB). In the reductase reaction, this 2-ketoacid undergoes a metal-dependent reduction by NADPH to yield (R)-2,3-dihydroxy-isovalerate.</text>
</comment>
<comment type="catalytic activity">
    <reaction evidence="1">
        <text>(2R)-2,3-dihydroxy-3-methylbutanoate + NADP(+) = (2S)-2-acetolactate + NADPH + H(+)</text>
        <dbReference type="Rhea" id="RHEA:22068"/>
        <dbReference type="ChEBI" id="CHEBI:15378"/>
        <dbReference type="ChEBI" id="CHEBI:49072"/>
        <dbReference type="ChEBI" id="CHEBI:57783"/>
        <dbReference type="ChEBI" id="CHEBI:58349"/>
        <dbReference type="ChEBI" id="CHEBI:58476"/>
        <dbReference type="EC" id="1.1.1.86"/>
    </reaction>
</comment>
<comment type="catalytic activity">
    <reaction evidence="1">
        <text>(2R,3R)-2,3-dihydroxy-3-methylpentanoate + NADP(+) = (S)-2-ethyl-2-hydroxy-3-oxobutanoate + NADPH + H(+)</text>
        <dbReference type="Rhea" id="RHEA:13493"/>
        <dbReference type="ChEBI" id="CHEBI:15378"/>
        <dbReference type="ChEBI" id="CHEBI:49256"/>
        <dbReference type="ChEBI" id="CHEBI:49258"/>
        <dbReference type="ChEBI" id="CHEBI:57783"/>
        <dbReference type="ChEBI" id="CHEBI:58349"/>
        <dbReference type="EC" id="1.1.1.86"/>
    </reaction>
</comment>
<comment type="cofactor">
    <cofactor evidence="1">
        <name>Mg(2+)</name>
        <dbReference type="ChEBI" id="CHEBI:18420"/>
    </cofactor>
    <text evidence="1">Binds 2 magnesium ions per subunit.</text>
</comment>
<comment type="pathway">
    <text evidence="1">Amino-acid biosynthesis; L-isoleucine biosynthesis; L-isoleucine from 2-oxobutanoate: step 2/4.</text>
</comment>
<comment type="pathway">
    <text evidence="1">Amino-acid biosynthesis; L-valine biosynthesis; L-valine from pyruvate: step 2/4.</text>
</comment>
<comment type="similarity">
    <text evidence="1">Belongs to the ketol-acid reductoisomerase family.</text>
</comment>
<proteinExistence type="inferred from homology"/>
<dbReference type="EC" id="1.1.1.86" evidence="1"/>
<dbReference type="EMBL" id="AM039952">
    <property type="protein sequence ID" value="CAJ25310.1"/>
    <property type="molecule type" value="Genomic_DNA"/>
</dbReference>
<dbReference type="RefSeq" id="WP_011348518.1">
    <property type="nucleotide sequence ID" value="NZ_CP017190.1"/>
</dbReference>
<dbReference type="SMR" id="Q3BPK3"/>
<dbReference type="STRING" id="456327.BJD11_04820"/>
<dbReference type="KEGG" id="xcv:XCV3579"/>
<dbReference type="eggNOG" id="COG0059">
    <property type="taxonomic scope" value="Bacteria"/>
</dbReference>
<dbReference type="HOGENOM" id="CLU_033821_0_1_6"/>
<dbReference type="UniPathway" id="UPA00047">
    <property type="reaction ID" value="UER00056"/>
</dbReference>
<dbReference type="UniPathway" id="UPA00049">
    <property type="reaction ID" value="UER00060"/>
</dbReference>
<dbReference type="Proteomes" id="UP000007069">
    <property type="component" value="Chromosome"/>
</dbReference>
<dbReference type="GO" id="GO:0005829">
    <property type="term" value="C:cytosol"/>
    <property type="evidence" value="ECO:0007669"/>
    <property type="project" value="TreeGrafter"/>
</dbReference>
<dbReference type="GO" id="GO:0004455">
    <property type="term" value="F:ketol-acid reductoisomerase activity"/>
    <property type="evidence" value="ECO:0007669"/>
    <property type="project" value="UniProtKB-UniRule"/>
</dbReference>
<dbReference type="GO" id="GO:0000287">
    <property type="term" value="F:magnesium ion binding"/>
    <property type="evidence" value="ECO:0007669"/>
    <property type="project" value="UniProtKB-UniRule"/>
</dbReference>
<dbReference type="GO" id="GO:0050661">
    <property type="term" value="F:NADP binding"/>
    <property type="evidence" value="ECO:0007669"/>
    <property type="project" value="InterPro"/>
</dbReference>
<dbReference type="GO" id="GO:0009097">
    <property type="term" value="P:isoleucine biosynthetic process"/>
    <property type="evidence" value="ECO:0007669"/>
    <property type="project" value="UniProtKB-UniRule"/>
</dbReference>
<dbReference type="GO" id="GO:0009099">
    <property type="term" value="P:L-valine biosynthetic process"/>
    <property type="evidence" value="ECO:0007669"/>
    <property type="project" value="UniProtKB-UniRule"/>
</dbReference>
<dbReference type="FunFam" id="3.40.50.720:FF:000023">
    <property type="entry name" value="Ketol-acid reductoisomerase (NADP(+))"/>
    <property type="match status" value="1"/>
</dbReference>
<dbReference type="Gene3D" id="6.10.240.10">
    <property type="match status" value="1"/>
</dbReference>
<dbReference type="Gene3D" id="3.40.50.720">
    <property type="entry name" value="NAD(P)-binding Rossmann-like Domain"/>
    <property type="match status" value="1"/>
</dbReference>
<dbReference type="HAMAP" id="MF_00435">
    <property type="entry name" value="IlvC"/>
    <property type="match status" value="1"/>
</dbReference>
<dbReference type="InterPro" id="IPR008927">
    <property type="entry name" value="6-PGluconate_DH-like_C_sf"/>
</dbReference>
<dbReference type="InterPro" id="IPR013023">
    <property type="entry name" value="KARI"/>
</dbReference>
<dbReference type="InterPro" id="IPR000506">
    <property type="entry name" value="KARI_C"/>
</dbReference>
<dbReference type="InterPro" id="IPR013116">
    <property type="entry name" value="KARI_N"/>
</dbReference>
<dbReference type="InterPro" id="IPR014359">
    <property type="entry name" value="KARI_prok"/>
</dbReference>
<dbReference type="InterPro" id="IPR036291">
    <property type="entry name" value="NAD(P)-bd_dom_sf"/>
</dbReference>
<dbReference type="NCBIfam" id="TIGR00465">
    <property type="entry name" value="ilvC"/>
    <property type="match status" value="1"/>
</dbReference>
<dbReference type="NCBIfam" id="NF004017">
    <property type="entry name" value="PRK05479.1"/>
    <property type="match status" value="1"/>
</dbReference>
<dbReference type="PANTHER" id="PTHR21371">
    <property type="entry name" value="KETOL-ACID REDUCTOISOMERASE, MITOCHONDRIAL"/>
    <property type="match status" value="1"/>
</dbReference>
<dbReference type="PANTHER" id="PTHR21371:SF1">
    <property type="entry name" value="KETOL-ACID REDUCTOISOMERASE, MITOCHONDRIAL"/>
    <property type="match status" value="1"/>
</dbReference>
<dbReference type="Pfam" id="PF01450">
    <property type="entry name" value="KARI_C"/>
    <property type="match status" value="1"/>
</dbReference>
<dbReference type="Pfam" id="PF07991">
    <property type="entry name" value="KARI_N"/>
    <property type="match status" value="1"/>
</dbReference>
<dbReference type="PIRSF" id="PIRSF000116">
    <property type="entry name" value="IlvC_gammaproteo"/>
    <property type="match status" value="1"/>
</dbReference>
<dbReference type="SUPFAM" id="SSF48179">
    <property type="entry name" value="6-phosphogluconate dehydrogenase C-terminal domain-like"/>
    <property type="match status" value="1"/>
</dbReference>
<dbReference type="SUPFAM" id="SSF51735">
    <property type="entry name" value="NAD(P)-binding Rossmann-fold domains"/>
    <property type="match status" value="1"/>
</dbReference>
<dbReference type="PROSITE" id="PS51851">
    <property type="entry name" value="KARI_C"/>
    <property type="match status" value="1"/>
</dbReference>
<dbReference type="PROSITE" id="PS51850">
    <property type="entry name" value="KARI_N"/>
    <property type="match status" value="1"/>
</dbReference>
<evidence type="ECO:0000255" key="1">
    <source>
        <dbReference type="HAMAP-Rule" id="MF_00435"/>
    </source>
</evidence>
<evidence type="ECO:0000255" key="2">
    <source>
        <dbReference type="PROSITE-ProRule" id="PRU01197"/>
    </source>
</evidence>
<evidence type="ECO:0000255" key="3">
    <source>
        <dbReference type="PROSITE-ProRule" id="PRU01198"/>
    </source>
</evidence>
<sequence>MSNDTQPKIAIIGYGSQGRAHALNLRDSGFDVTVGLRAGGPTEAKAQADGFIVVAPSEAVKSADLVAILTPDMVQKKLYEEVIAPNMKQGACLLFAHGLNVHFDMIKPRADLDVVLVAPKGPGALVRREYEIGRGVPCIYAVYQDTSGKAEQFALTYAGGLGGARANIIKTTFKEETETDLFGEQAVLCGGASSLVQAGFEVLVEAGYQPEIAYYEVLHELKLIVDLFYEGGITRMLEFVSETAQYGDYVSGPRVIDAGTKARMKDVLTDIQNGTFTKNWVAEYDAGLPNYNKFKQADLEHPIEEVGKKLRAKMVWLNGQQQAAAAPANQQAA</sequence>
<organism>
    <name type="scientific">Xanthomonas euvesicatoria pv. vesicatoria (strain 85-10)</name>
    <name type="common">Xanthomonas campestris pv. vesicatoria</name>
    <dbReference type="NCBI Taxonomy" id="316273"/>
    <lineage>
        <taxon>Bacteria</taxon>
        <taxon>Pseudomonadati</taxon>
        <taxon>Pseudomonadota</taxon>
        <taxon>Gammaproteobacteria</taxon>
        <taxon>Lysobacterales</taxon>
        <taxon>Lysobacteraceae</taxon>
        <taxon>Xanthomonas</taxon>
    </lineage>
</organism>
<accession>Q3BPK3</accession>
<keyword id="KW-0028">Amino-acid biosynthesis</keyword>
<keyword id="KW-0100">Branched-chain amino acid biosynthesis</keyword>
<keyword id="KW-0460">Magnesium</keyword>
<keyword id="KW-0479">Metal-binding</keyword>
<keyword id="KW-0521">NADP</keyword>
<keyword id="KW-0560">Oxidoreductase</keyword>